<proteinExistence type="inferred from homology"/>
<sequence>MARLNPLSFTPGPVIFFTCAVYIALFAALLTVHLRVPDYPSKTPDGVNLTQAWSDLEKITRRFHPYNSHANDDVRDYLLTRVKSIIASKKLGGDQVELIDDNESNATFSSGSTTVYFEGTNIIVAIRGSEDDEPYHSPQSSPPGERRLDNGGVLVNAHYDSVSSGYGATDDGVGVVTVLQLLSYFTESKNWPKRTVILLLNNGEEDFLNGAKAFMRHPISQIAHTFVNLEGAGAGGRATMFRSTDTEVTRYYKASSHPFASVVSGDGFKKRLIRSETDYKVFYEELGLRGLDIAFMEPRARYHTVEDSTRETSLNSVWHMLSAAIATTSGLASDTSEQFSGSEDEHEPYTGKVKTGHGTDAVWFDLFGKVFVVFQLHTMFALCVTLLVVAPLFLIGLTFGLSKADKNYLFARKAYMYSSDDDHPVHLYGWRGFFRFPIVFSIATAVVVGLAYLMVRLNPLILYSSPYAVWSMMLSAWFSVAWFFSRGASAMRPSALQRMYALIWLFAGSFALLAFVTVLSNNYQVAGGYFALFYFAGIFLALVLSYLELFFAPTKTAFARYSAQGDEPVSRPLTGTTTAARSEEPPIADDDATETTSLLRGDRRSFARHSGRRDSIDDENGNRDEEPVQLDLKQPYPGEQDWSGKLPGWLWLLQLLLVAPIVVILVGQIALLLTSALHQTPADGNSSLFVYLAFALLTTLLLAPIGPFIHRFTWHVPTFVFLVCVATVIYNLVAFPFSREHRLKVYFVQQVDLATGNNRVSLTGVDGYVQRIVADLPSAQGEQINCTTPEAANRKELMTCTWPGLPAQVVTRASRFSNKTDTDGWLDFSITTSNKTNEATISVAGQNTRACRIVVDSHHSGVTNVTVAGAVSDPRFKAVGETGSREIRLWHREWSHPWNVSVTWPRENSKPSGRIICLWSDANAGDIPAFDEVQHYLPVWAIPSKISDGLVEGFKYFQV</sequence>
<dbReference type="EC" id="3.4.-.-" evidence="6"/>
<dbReference type="EMBL" id="CH445332">
    <property type="protein sequence ID" value="EAT86623.1"/>
    <property type="molecule type" value="Genomic_DNA"/>
</dbReference>
<dbReference type="RefSeq" id="XP_001795964.1">
    <property type="nucleotide sequence ID" value="XM_001795912.1"/>
</dbReference>
<dbReference type="SMR" id="Q0URQ5"/>
<dbReference type="FunCoup" id="Q0URQ5">
    <property type="interactions" value="3"/>
</dbReference>
<dbReference type="STRING" id="321614.Q0URQ5"/>
<dbReference type="EnsemblFungi" id="SNOT_05559">
    <property type="protein sequence ID" value="SNOT_05559"/>
    <property type="gene ID" value="SNOG_05559"/>
</dbReference>
<dbReference type="GeneID" id="5972841"/>
<dbReference type="KEGG" id="pno:SNOG_05559"/>
<dbReference type="VEuPathDB" id="FungiDB:JI435_055590"/>
<dbReference type="eggNOG" id="KOG2194">
    <property type="taxonomic scope" value="Eukaryota"/>
</dbReference>
<dbReference type="HOGENOM" id="CLU_006412_1_0_1"/>
<dbReference type="InParanoid" id="Q0URQ5"/>
<dbReference type="OMA" id="TPWPVTI"/>
<dbReference type="OrthoDB" id="76293at2759"/>
<dbReference type="Proteomes" id="UP000001055">
    <property type="component" value="Unassembled WGS sequence"/>
</dbReference>
<dbReference type="GO" id="GO:0005774">
    <property type="term" value="C:vacuolar membrane"/>
    <property type="evidence" value="ECO:0007669"/>
    <property type="project" value="UniProtKB-SubCell"/>
</dbReference>
<dbReference type="GO" id="GO:0046872">
    <property type="term" value="F:metal ion binding"/>
    <property type="evidence" value="ECO:0007669"/>
    <property type="project" value="UniProtKB-KW"/>
</dbReference>
<dbReference type="GO" id="GO:0008235">
    <property type="term" value="F:metalloexopeptidase activity"/>
    <property type="evidence" value="ECO:0007669"/>
    <property type="project" value="InterPro"/>
</dbReference>
<dbReference type="GO" id="GO:0006508">
    <property type="term" value="P:proteolysis"/>
    <property type="evidence" value="ECO:0000318"/>
    <property type="project" value="GO_Central"/>
</dbReference>
<dbReference type="CDD" id="cd03875">
    <property type="entry name" value="M28_Fxna_like"/>
    <property type="match status" value="1"/>
</dbReference>
<dbReference type="FunFam" id="3.40.630.10:FF:000057">
    <property type="entry name" value="Vacuolar membrane protease"/>
    <property type="match status" value="1"/>
</dbReference>
<dbReference type="Gene3D" id="3.40.630.10">
    <property type="entry name" value="Zn peptidases"/>
    <property type="match status" value="1"/>
</dbReference>
<dbReference type="InterPro" id="IPR048024">
    <property type="entry name" value="Fxna-like_M28_dom"/>
</dbReference>
<dbReference type="InterPro" id="IPR045175">
    <property type="entry name" value="M28_fam"/>
</dbReference>
<dbReference type="InterPro" id="IPR007484">
    <property type="entry name" value="Peptidase_M28"/>
</dbReference>
<dbReference type="InterPro" id="IPR053975">
    <property type="entry name" value="PFF1_C"/>
</dbReference>
<dbReference type="InterPro" id="IPR053976">
    <property type="entry name" value="PFF1_TM"/>
</dbReference>
<dbReference type="PANTHER" id="PTHR12147">
    <property type="entry name" value="METALLOPEPTIDASE M28 FAMILY MEMBER"/>
    <property type="match status" value="1"/>
</dbReference>
<dbReference type="PANTHER" id="PTHR12147:SF58">
    <property type="entry name" value="VACUOLAR MEMBRANE PROTEASE"/>
    <property type="match status" value="1"/>
</dbReference>
<dbReference type="Pfam" id="PF04389">
    <property type="entry name" value="Peptidase_M28"/>
    <property type="match status" value="1"/>
</dbReference>
<dbReference type="Pfam" id="PF22250">
    <property type="entry name" value="PFF1_C"/>
    <property type="match status" value="1"/>
</dbReference>
<dbReference type="Pfam" id="PF22251">
    <property type="entry name" value="PFF1_TM"/>
    <property type="match status" value="1"/>
</dbReference>
<dbReference type="SUPFAM" id="SSF53187">
    <property type="entry name" value="Zn-dependent exopeptidases"/>
    <property type="match status" value="1"/>
</dbReference>
<comment type="function">
    <text evidence="1">May be involved in vacuolar sorting and osmoregulation.</text>
</comment>
<comment type="cofactor">
    <cofactor evidence="2">
        <name>Zn(2+)</name>
        <dbReference type="ChEBI" id="CHEBI:29105"/>
    </cofactor>
    <text evidence="2">Binds 2 Zn(2+) ions per subunit.</text>
</comment>
<comment type="subcellular location">
    <subcellularLocation>
        <location evidence="1">Vacuole membrane</location>
        <topology evidence="3">Multi-pass membrane protein</topology>
    </subcellularLocation>
</comment>
<comment type="similarity">
    <text evidence="6">Belongs to the peptidase M28 family.</text>
</comment>
<name>PFF1_PHANO</name>
<keyword id="KW-0325">Glycoprotein</keyword>
<keyword id="KW-0378">Hydrolase</keyword>
<keyword id="KW-0472">Membrane</keyword>
<keyword id="KW-0479">Metal-binding</keyword>
<keyword id="KW-0482">Metalloprotease</keyword>
<keyword id="KW-0645">Protease</keyword>
<keyword id="KW-0812">Transmembrane</keyword>
<keyword id="KW-1133">Transmembrane helix</keyword>
<keyword id="KW-0926">Vacuole</keyword>
<keyword id="KW-0862">Zinc</keyword>
<protein>
    <recommendedName>
        <fullName evidence="1">Vacuolar membrane protease</fullName>
        <ecNumber evidence="6">3.4.-.-</ecNumber>
    </recommendedName>
    <alternativeName>
        <fullName evidence="1">FXNA-related family protease 1</fullName>
    </alternativeName>
</protein>
<gene>
    <name type="ORF">SNOG_05559</name>
</gene>
<accession>Q0URQ5</accession>
<feature type="chain" id="PRO_0000411733" description="Vacuolar membrane protease">
    <location>
        <begin position="1"/>
        <end position="959"/>
    </location>
</feature>
<feature type="topological domain" description="Cytoplasmic" evidence="1">
    <location>
        <begin position="1"/>
        <end position="13"/>
    </location>
</feature>
<feature type="transmembrane region" description="Helical; Name=1" evidence="3">
    <location>
        <begin position="14"/>
        <end position="34"/>
    </location>
</feature>
<feature type="topological domain" description="Vacuolar" evidence="1">
    <location>
        <begin position="35"/>
        <end position="378"/>
    </location>
</feature>
<feature type="transmembrane region" description="Helical; Name=2" evidence="3">
    <location>
        <begin position="379"/>
        <end position="399"/>
    </location>
</feature>
<feature type="topological domain" description="Cytoplasmic" evidence="1">
    <location>
        <begin position="400"/>
        <end position="432"/>
    </location>
</feature>
<feature type="transmembrane region" description="Helical; Name=3" evidence="3">
    <location>
        <begin position="433"/>
        <end position="453"/>
    </location>
</feature>
<feature type="topological domain" description="Vacuolar" evidence="1">
    <location>
        <begin position="454"/>
        <end position="463"/>
    </location>
</feature>
<feature type="transmembrane region" description="Helical; Name=4" evidence="3">
    <location>
        <begin position="464"/>
        <end position="484"/>
    </location>
</feature>
<feature type="topological domain" description="Cytoplasmic" evidence="1">
    <location>
        <begin position="485"/>
        <end position="498"/>
    </location>
</feature>
<feature type="transmembrane region" description="Helical; Name=5" evidence="3">
    <location>
        <begin position="499"/>
        <end position="519"/>
    </location>
</feature>
<feature type="topological domain" description="Vacuolar" evidence="1">
    <location>
        <begin position="520"/>
        <end position="524"/>
    </location>
</feature>
<feature type="transmembrane region" description="Helical; Name=6" evidence="3">
    <location>
        <begin position="525"/>
        <end position="545"/>
    </location>
</feature>
<feature type="topological domain" description="Cytoplasmic" evidence="1">
    <location>
        <begin position="546"/>
        <end position="645"/>
    </location>
</feature>
<feature type="transmembrane region" description="Helical; Name=7" evidence="3">
    <location>
        <begin position="646"/>
        <end position="666"/>
    </location>
</feature>
<feature type="topological domain" description="Vacuolar" evidence="1">
    <location>
        <begin position="667"/>
        <end position="688"/>
    </location>
</feature>
<feature type="transmembrane region" description="Helical; Name=8" evidence="3">
    <location>
        <begin position="689"/>
        <end position="709"/>
    </location>
</feature>
<feature type="topological domain" description="Cytoplasmic" evidence="1">
    <location>
        <begin position="710"/>
        <end position="716"/>
    </location>
</feature>
<feature type="transmembrane region" description="Helical; Name=9" evidence="3">
    <location>
        <begin position="717"/>
        <end position="737"/>
    </location>
</feature>
<feature type="topological domain" description="Vacuolar" evidence="1">
    <location>
        <begin position="738"/>
        <end position="959"/>
    </location>
</feature>
<feature type="region of interest" description="Disordered" evidence="5">
    <location>
        <begin position="128"/>
        <end position="149"/>
    </location>
</feature>
<feature type="region of interest" description="Disordered" evidence="5">
    <location>
        <begin position="566"/>
        <end position="594"/>
    </location>
</feature>
<feature type="region of interest" description="Disordered" evidence="5">
    <location>
        <begin position="606"/>
        <end position="635"/>
    </location>
</feature>
<feature type="compositionally biased region" description="Basic and acidic residues" evidence="5">
    <location>
        <begin position="612"/>
        <end position="626"/>
    </location>
</feature>
<feature type="active site" description="Proton acceptor" evidence="2">
    <location>
        <position position="204"/>
    </location>
</feature>
<feature type="binding site" evidence="2">
    <location>
        <position position="158"/>
    </location>
    <ligand>
        <name>Zn(2+)</name>
        <dbReference type="ChEBI" id="CHEBI:29105"/>
        <label>1</label>
        <note>catalytic</note>
    </ligand>
</feature>
<feature type="binding site" evidence="2">
    <location>
        <position position="170"/>
    </location>
    <ligand>
        <name>Zn(2+)</name>
        <dbReference type="ChEBI" id="CHEBI:29105"/>
        <label>1</label>
        <note>catalytic</note>
    </ligand>
</feature>
<feature type="binding site" evidence="2">
    <location>
        <position position="170"/>
    </location>
    <ligand>
        <name>Zn(2+)</name>
        <dbReference type="ChEBI" id="CHEBI:29105"/>
        <label>2</label>
        <note>catalytic</note>
    </ligand>
</feature>
<feature type="binding site" evidence="2">
    <location>
        <position position="205"/>
    </location>
    <ligand>
        <name>Zn(2+)</name>
        <dbReference type="ChEBI" id="CHEBI:29105"/>
        <label>2</label>
        <note>catalytic</note>
    </ligand>
</feature>
<feature type="binding site" evidence="2">
    <location>
        <position position="230"/>
    </location>
    <ligand>
        <name>Zn(2+)</name>
        <dbReference type="ChEBI" id="CHEBI:29105"/>
        <label>1</label>
        <note>catalytic</note>
    </ligand>
</feature>
<feature type="binding site" evidence="2">
    <location>
        <position position="303"/>
    </location>
    <ligand>
        <name>Zn(2+)</name>
        <dbReference type="ChEBI" id="CHEBI:29105"/>
        <label>2</label>
        <note>catalytic</note>
    </ligand>
</feature>
<feature type="site" description="Transition state stabilizer" evidence="2">
    <location>
        <position position="302"/>
    </location>
</feature>
<feature type="glycosylation site" description="N-linked (GlcNAc...) asparagine" evidence="4">
    <location>
        <position position="48"/>
    </location>
</feature>
<feature type="glycosylation site" description="N-linked (GlcNAc...) asparagine" evidence="4">
    <location>
        <position position="102"/>
    </location>
</feature>
<feature type="glycosylation site" description="N-linked (GlcNAc...) asparagine" evidence="4">
    <location>
        <position position="105"/>
    </location>
</feature>
<feature type="glycosylation site" description="N-linked (GlcNAc...) asparagine" evidence="4">
    <location>
        <position position="685"/>
    </location>
</feature>
<feature type="glycosylation site" description="N-linked (GlcNAc...) asparagine" evidence="4">
    <location>
        <position position="785"/>
    </location>
</feature>
<feature type="glycosylation site" description="N-linked (GlcNAc...) asparagine" evidence="4">
    <location>
        <position position="818"/>
    </location>
</feature>
<feature type="glycosylation site" description="N-linked (GlcNAc...) asparagine" evidence="4">
    <location>
        <position position="834"/>
    </location>
</feature>
<feature type="glycosylation site" description="N-linked (GlcNAc...) asparagine" evidence="4">
    <location>
        <position position="864"/>
    </location>
</feature>
<feature type="glycosylation site" description="N-linked (GlcNAc...) asparagine" evidence="4">
    <location>
        <position position="899"/>
    </location>
</feature>
<organism>
    <name type="scientific">Phaeosphaeria nodorum (strain SN15 / ATCC MYA-4574 / FGSC 10173)</name>
    <name type="common">Glume blotch fungus</name>
    <name type="synonym">Parastagonospora nodorum</name>
    <dbReference type="NCBI Taxonomy" id="321614"/>
    <lineage>
        <taxon>Eukaryota</taxon>
        <taxon>Fungi</taxon>
        <taxon>Dikarya</taxon>
        <taxon>Ascomycota</taxon>
        <taxon>Pezizomycotina</taxon>
        <taxon>Dothideomycetes</taxon>
        <taxon>Pleosporomycetidae</taxon>
        <taxon>Pleosporales</taxon>
        <taxon>Pleosporineae</taxon>
        <taxon>Phaeosphaeriaceae</taxon>
        <taxon>Parastagonospora</taxon>
    </lineage>
</organism>
<reference key="1">
    <citation type="journal article" date="2007" name="Plant Cell">
        <title>Dothideomycete-plant interactions illuminated by genome sequencing and EST analysis of the wheat pathogen Stagonospora nodorum.</title>
        <authorList>
            <person name="Hane J.K."/>
            <person name="Lowe R.G.T."/>
            <person name="Solomon P.S."/>
            <person name="Tan K.-C."/>
            <person name="Schoch C.L."/>
            <person name="Spatafora J.W."/>
            <person name="Crous P.W."/>
            <person name="Kodira C.D."/>
            <person name="Birren B.W."/>
            <person name="Galagan J.E."/>
            <person name="Torriani S.F.F."/>
            <person name="McDonald B.A."/>
            <person name="Oliver R.P."/>
        </authorList>
    </citation>
    <scope>NUCLEOTIDE SEQUENCE [LARGE SCALE GENOMIC DNA]</scope>
    <source>
        <strain>SN15 / ATCC MYA-4574 / FGSC 10173</strain>
    </source>
</reference>
<evidence type="ECO:0000250" key="1">
    <source>
        <dbReference type="UniProtKB" id="P38244"/>
    </source>
</evidence>
<evidence type="ECO:0000250" key="2">
    <source>
        <dbReference type="UniProtKB" id="P80561"/>
    </source>
</evidence>
<evidence type="ECO:0000255" key="3"/>
<evidence type="ECO:0000255" key="4">
    <source>
        <dbReference type="PROSITE-ProRule" id="PRU00498"/>
    </source>
</evidence>
<evidence type="ECO:0000256" key="5">
    <source>
        <dbReference type="SAM" id="MobiDB-lite"/>
    </source>
</evidence>
<evidence type="ECO:0000305" key="6"/>